<proteinExistence type="evidence at protein level"/>
<accession>A0A1L9WLD6</accession>
<gene>
    <name evidence="8" type="primary">AacuQ</name>
    <name type="ORF">ASPACDRAFT_46492</name>
</gene>
<evidence type="ECO:0000255" key="1"/>
<evidence type="ECO:0000269" key="2">
    <source>
    </source>
</evidence>
<evidence type="ECO:0000269" key="3">
    <source>
    </source>
</evidence>
<evidence type="ECO:0000269" key="4">
    <source>
    </source>
</evidence>
<evidence type="ECO:0000269" key="5">
    <source>
    </source>
</evidence>
<evidence type="ECO:0000269" key="6">
    <source>
    </source>
</evidence>
<evidence type="ECO:0000269" key="7">
    <source>
    </source>
</evidence>
<evidence type="ECO:0000303" key="8">
    <source>
    </source>
</evidence>
<evidence type="ECO:0000305" key="9"/>
<evidence type="ECO:0000305" key="10">
    <source>
    </source>
</evidence>
<evidence type="ECO:0000305" key="11">
    <source>
    </source>
</evidence>
<dbReference type="EC" id="2.1.1.-" evidence="10"/>
<dbReference type="EMBL" id="KV878984">
    <property type="protein sequence ID" value="OJJ96967.1"/>
    <property type="molecule type" value="Genomic_DNA"/>
</dbReference>
<dbReference type="RefSeq" id="XP_020053307.1">
    <property type="nucleotide sequence ID" value="XM_020201793.1"/>
</dbReference>
<dbReference type="SMR" id="A0A1L9WLD6"/>
<dbReference type="STRING" id="690307.A0A1L9WLD6"/>
<dbReference type="GeneID" id="30975607"/>
<dbReference type="VEuPathDB" id="FungiDB:ASPACDRAFT_46492"/>
<dbReference type="OMA" id="TNVMHFC"/>
<dbReference type="OrthoDB" id="10027013at2759"/>
<dbReference type="Proteomes" id="UP000184546">
    <property type="component" value="Unassembled WGS sequence"/>
</dbReference>
<dbReference type="GO" id="GO:0008757">
    <property type="term" value="F:S-adenosylmethionine-dependent methyltransferase activity"/>
    <property type="evidence" value="ECO:0007669"/>
    <property type="project" value="InterPro"/>
</dbReference>
<dbReference type="GO" id="GO:0032259">
    <property type="term" value="P:methylation"/>
    <property type="evidence" value="ECO:0007669"/>
    <property type="project" value="UniProtKB-KW"/>
</dbReference>
<dbReference type="CDD" id="cd02440">
    <property type="entry name" value="AdoMet_MTases"/>
    <property type="match status" value="1"/>
</dbReference>
<dbReference type="Gene3D" id="3.40.50.150">
    <property type="entry name" value="Vaccinia Virus protein VP39"/>
    <property type="match status" value="1"/>
</dbReference>
<dbReference type="InterPro" id="IPR051052">
    <property type="entry name" value="Diverse_substrate_MTase"/>
</dbReference>
<dbReference type="InterPro" id="IPR013216">
    <property type="entry name" value="Methyltransf_11"/>
</dbReference>
<dbReference type="InterPro" id="IPR029063">
    <property type="entry name" value="SAM-dependent_MTases_sf"/>
</dbReference>
<dbReference type="PANTHER" id="PTHR44942">
    <property type="entry name" value="METHYLTRANSF_11 DOMAIN-CONTAINING PROTEIN"/>
    <property type="match status" value="1"/>
</dbReference>
<dbReference type="PANTHER" id="PTHR44942:SF4">
    <property type="entry name" value="METHYLTRANSFERASE TYPE 11 DOMAIN-CONTAINING PROTEIN"/>
    <property type="match status" value="1"/>
</dbReference>
<dbReference type="Pfam" id="PF08241">
    <property type="entry name" value="Methyltransf_11"/>
    <property type="match status" value="1"/>
</dbReference>
<dbReference type="SUPFAM" id="SSF53335">
    <property type="entry name" value="S-adenosyl-L-methionine-dependent methyltransferases"/>
    <property type="match status" value="1"/>
</dbReference>
<reference key="1">
    <citation type="journal article" date="2017" name="Genome Biol.">
        <title>Comparative genomics reveals high biological diversity and specific adaptations in the industrially and medically important fungal genus Aspergillus.</title>
        <authorList>
            <person name="de Vries R.P."/>
            <person name="Riley R."/>
            <person name="Wiebenga A."/>
            <person name="Aguilar-Osorio G."/>
            <person name="Amillis S."/>
            <person name="Uchima C.A."/>
            <person name="Anderluh G."/>
            <person name="Asadollahi M."/>
            <person name="Askin M."/>
            <person name="Barry K."/>
            <person name="Battaglia E."/>
            <person name="Bayram O."/>
            <person name="Benocci T."/>
            <person name="Braus-Stromeyer S.A."/>
            <person name="Caldana C."/>
            <person name="Canovas D."/>
            <person name="Cerqueira G.C."/>
            <person name="Chen F."/>
            <person name="Chen W."/>
            <person name="Choi C."/>
            <person name="Clum A."/>
            <person name="Dos Santos R.A."/>
            <person name="Damasio A.R."/>
            <person name="Diallinas G."/>
            <person name="Emri T."/>
            <person name="Fekete E."/>
            <person name="Flipphi M."/>
            <person name="Freyberg S."/>
            <person name="Gallo A."/>
            <person name="Gournas C."/>
            <person name="Habgood R."/>
            <person name="Hainaut M."/>
            <person name="Harispe M.L."/>
            <person name="Henrissat B."/>
            <person name="Hilden K.S."/>
            <person name="Hope R."/>
            <person name="Hossain A."/>
            <person name="Karabika E."/>
            <person name="Karaffa L."/>
            <person name="Karanyi Z."/>
            <person name="Krasevec N."/>
            <person name="Kuo A."/>
            <person name="Kusch H."/>
            <person name="LaButti K."/>
            <person name="Lagendijk E.L."/>
            <person name="Lapidus A."/>
            <person name="Levasseur A."/>
            <person name="Lindquist E."/>
            <person name="Lipzen A."/>
            <person name="Logrieco A.F."/>
            <person name="MacCabe A."/>
            <person name="Maekelae M.R."/>
            <person name="Malavazi I."/>
            <person name="Melin P."/>
            <person name="Meyer V."/>
            <person name="Mielnichuk N."/>
            <person name="Miskei M."/>
            <person name="Molnar A.P."/>
            <person name="Mule G."/>
            <person name="Ngan C.Y."/>
            <person name="Orejas M."/>
            <person name="Orosz E."/>
            <person name="Ouedraogo J.P."/>
            <person name="Overkamp K.M."/>
            <person name="Park H.-S."/>
            <person name="Perrone G."/>
            <person name="Piumi F."/>
            <person name="Punt P.J."/>
            <person name="Ram A.F."/>
            <person name="Ramon A."/>
            <person name="Rauscher S."/>
            <person name="Record E."/>
            <person name="Riano-Pachon D.M."/>
            <person name="Robert V."/>
            <person name="Roehrig J."/>
            <person name="Ruller R."/>
            <person name="Salamov A."/>
            <person name="Salih N.S."/>
            <person name="Samson R.A."/>
            <person name="Sandor E."/>
            <person name="Sanguinetti M."/>
            <person name="Schuetze T."/>
            <person name="Sepcic K."/>
            <person name="Shelest E."/>
            <person name="Sherlock G."/>
            <person name="Sophianopoulou V."/>
            <person name="Squina F.M."/>
            <person name="Sun H."/>
            <person name="Susca A."/>
            <person name="Todd R.B."/>
            <person name="Tsang A."/>
            <person name="Unkles S.E."/>
            <person name="van de Wiele N."/>
            <person name="van Rossen-Uffink D."/>
            <person name="Oliveira J.V."/>
            <person name="Vesth T.C."/>
            <person name="Visser J."/>
            <person name="Yu J.-H."/>
            <person name="Zhou M."/>
            <person name="Andersen M.R."/>
            <person name="Archer D.B."/>
            <person name="Baker S.E."/>
            <person name="Benoit I."/>
            <person name="Brakhage A.A."/>
            <person name="Braus G.H."/>
            <person name="Fischer R."/>
            <person name="Frisvad J.C."/>
            <person name="Goldman G.H."/>
            <person name="Houbraken J."/>
            <person name="Oakley B."/>
            <person name="Pocsi I."/>
            <person name="Scazzocchio C."/>
            <person name="Seiboth B."/>
            <person name="vanKuyk P.A."/>
            <person name="Wortman J."/>
            <person name="Dyer P.S."/>
            <person name="Grigoriev I.V."/>
        </authorList>
    </citation>
    <scope>NUCLEOTIDE SEQUENCE [LARGE SCALE GENOMIC DNA]</scope>
    <source>
        <strain>ATCC 16872 / CBS 172.66 / WB 5094</strain>
    </source>
</reference>
<reference key="2">
    <citation type="journal article" date="2017" name="Neoplasma">
        <title>Secalonic acid- F inhibited cell growth more effectively than 5-fluorouracil on hepatocellular carcinoma in vitro and in vivo.</title>
        <authorList>
            <person name="Gao X."/>
            <person name="Sun H.L."/>
            <person name="Liu D.S."/>
            <person name="Zhang J.R."/>
            <person name="Zhang J."/>
            <person name="Yan M.M."/>
            <person name="Pan X.H."/>
        </authorList>
    </citation>
    <scope>BIOTECHNOLOGY</scope>
</reference>
<reference key="3">
    <citation type="journal article" date="2018" name="Curr. Microbiol.">
        <title>Secondary Metabolites and Their Biological Activity from Aspergillus aculeatus KKU-CT2.</title>
        <authorList>
            <person name="Yodsing N."/>
            <person name="Lekphrom R."/>
            <person name="Sangsopha W."/>
            <person name="Aimi T."/>
            <person name="Boonlue S."/>
        </authorList>
    </citation>
    <scope>BIOTECHNOLOGY</scope>
</reference>
<reference key="4">
    <citation type="journal article" date="2019" name="Chem. Sci.">
        <title>Structure revision of cryptosporioptides and determination of the genetic basis for dimeric xanthone biosynthesis in fungi.</title>
        <authorList>
            <person name="Greco C."/>
            <person name="de Mattos-Shipley K."/>
            <person name="Bailey A.M."/>
            <person name="Mulholland N.P."/>
            <person name="Vincent J.L."/>
            <person name="Willis C.L."/>
            <person name="Cox R.J."/>
            <person name="Simpson T.J."/>
        </authorList>
    </citation>
    <scope>IDENTIFICATION</scope>
    <scope>FUNCTION</scope>
</reference>
<reference key="5">
    <citation type="journal article" date="2019" name="Molecules">
        <title>Secalonic Acid-F, a Novel Mycotoxin, Represses the Progression of Hepatocellular Carcinoma via MARCH1 Regulation of the PI3K/AKT/beta-catenin Signaling Pathway.</title>
        <authorList>
            <person name="Xie L."/>
            <person name="Li M."/>
            <person name="Liu D."/>
            <person name="Wang X."/>
            <person name="Wang P."/>
            <person name="Dai H."/>
            <person name="Yang W."/>
            <person name="Liu W."/>
            <person name="Hu X."/>
            <person name="Zhao M."/>
        </authorList>
    </citation>
    <scope>BIOTECHNOLOGY</scope>
</reference>
<reference key="6">
    <citation type="journal article" date="2020" name="ACS Omega">
        <title>Discovery of a Secalonic Acid Derivative from Aspergillus aculeatus, an Endophyte of Rosa damascena Mill., Triggers Apoptosis in MDA-MB-231 Triple Negative Breast Cancer Cells.</title>
        <authorList>
            <person name="Farooq S."/>
            <person name="Qayum A."/>
            <person name="Nalli Y."/>
            <person name="Lauro G."/>
            <person name="Chini M.G."/>
            <person name="Bifulco G."/>
            <person name="Chaubey A."/>
            <person name="Singh S.K."/>
            <person name="Riyaz-Ul-Hassan S."/>
            <person name="Ali A."/>
        </authorList>
    </citation>
    <scope>BIOTECHNOLOGY</scope>
</reference>
<reference key="7">
    <citation type="journal article" date="2021" name="J. Nat. Prod.">
        <title>Heterologous biosynthesis of tetrahydroxanthone dimers: determination of key factors for selective or divergent synthesis.</title>
        <authorList>
            <person name="Wei X."/>
            <person name="Chen X."/>
            <person name="Chen L."/>
            <person name="Yan D."/>
            <person name="Wang W.G."/>
            <person name="Matsuda Y."/>
        </authorList>
    </citation>
    <scope>FUNCTION</scope>
    <scope>CATALYTIC ACTIVITY</scope>
    <scope>PATHWAY</scope>
</reference>
<feature type="chain" id="PRO_0000453495" description="Methyltransferase AacuQ">
    <location>
        <begin position="1"/>
        <end position="309"/>
    </location>
</feature>
<feature type="region of interest" description="Methyltransferase domain" evidence="1">
    <location>
        <begin position="57"/>
        <end position="149"/>
    </location>
</feature>
<comment type="function">
    <text evidence="5 7 11">Methyltransferase; part of the gene cluster that mediates the biosynthesis of the tetrahydroxanthone dimer secalonic acid D (PubMed:30996871, PubMed:33891392). The pathway begins with the synthesis of atrochrysone thioester by the polyketide synthase AacuL (Probable). The atrochrysone carboxyl ACP thioesterase AacuM then breaks the thioester bond and releases the atrochrysone carboxylic acid from AacuL (Probable). Atrochrysone carboxylic acid is decarboxylated by the decarboxylase AacuI, and oxidized by the anthrone oxygenase AacuG to yield emodin (Probable). Emodin is then reduced to emodin hydroquinone by a yet unidentified oxidoreductase (Probable). A-ring reduction by the short chain dehydrogenase AacuN, dehydration by the scytalone dehydratase-like protein AacuK and probable spontaneous re-oxidation, results in overall deoxygenation to chrysophanol (PubMed:33891392). Baeyer-Villiger oxidation by the Baeyer-Villiger monooxygenase (BVMO) AacuH then yields monodictyphenone (PubMed:33891392). Monodictyphenone is transformed into compounds with the tetrahydroxanthone skeleton via methylesterification by the methyltransferase AacuQ, followed by the action of the flavin-dependent monooxygenase AacuC, the isomerase AacuP, and the short chain dehydrogenase/reductase AacuF or AacuD (PubMed:33891392). AacuF and AacuD should accept the same compound as a substrate but perform the ketoreduction with a different stereoselectivity, thus yielding blennolides B and A, respectively (PubMed:33891392). In the final step of the biosynthesis, the cytochrome P450 monooxygenase AacuE accepts blennolide B and/or blennolide A to conduct the dimerization reaction to furnish the tetrahydroxanthone dimers, secalonic acids D, B, and F (PubMed:33891392).</text>
</comment>
<comment type="pathway">
    <text evidence="10">Secondary metabolite biosynthesis.</text>
</comment>
<comment type="biotechnology">
    <text evidence="2 3 4 6">Secalonic acids show unprecedented anticancer activities against various human cancer cells and might be interesting for further derivatization, targeting diseases such as cancer.</text>
</comment>
<comment type="similarity">
    <text evidence="9">Belongs to the methyltransferase superfamily.</text>
</comment>
<keyword id="KW-0489">Methyltransferase</keyword>
<keyword id="KW-1185">Reference proteome</keyword>
<keyword id="KW-0949">S-adenosyl-L-methionine</keyword>
<keyword id="KW-0808">Transferase</keyword>
<sequence>MATATVPFFDSNDRLFDQGKAFWNNYLKGRPSAPDAFFQRLFNYHQSHGGQFGTVHDVGAGNGPYAHILRSKFQHVIISDIAKENVVLAEDRLGVDGFSYRAARVEEGDDIAPGSVDMVFATNVLHFCDQPLAMSEIARQLRPGGTFACAAFGAAQFEDPRIQDVYTRINHSGGRALLAKADDPEKLVAVMARTQGKYNVAPLDEGLFRPRAQRIHLNMENGGITAPLPPEVQVHEPVYTGVDDVETFVQEDGWSFVTGLEGVKEHVLSFPFARDDPNFGELWQEMEEIIGDDEVKGTWPAKIILATRR</sequence>
<name>AACUQ_ASPA1</name>
<protein>
    <recommendedName>
        <fullName evidence="8">Methyltransferase AacuQ</fullName>
        <ecNumber evidence="10">2.1.1.-</ecNumber>
    </recommendedName>
    <alternativeName>
        <fullName evidence="8">Secalonic acid biosynthesis cluster protein Q</fullName>
    </alternativeName>
</protein>
<organism>
    <name type="scientific">Aspergillus aculeatus (strain ATCC 16872 / CBS 172.66 / WB 5094)</name>
    <dbReference type="NCBI Taxonomy" id="690307"/>
    <lineage>
        <taxon>Eukaryota</taxon>
        <taxon>Fungi</taxon>
        <taxon>Dikarya</taxon>
        <taxon>Ascomycota</taxon>
        <taxon>Pezizomycotina</taxon>
        <taxon>Eurotiomycetes</taxon>
        <taxon>Eurotiomycetidae</taxon>
        <taxon>Eurotiales</taxon>
        <taxon>Aspergillaceae</taxon>
        <taxon>Aspergillus</taxon>
        <taxon>Aspergillus subgen. Circumdati</taxon>
    </lineage>
</organism>